<gene>
    <name evidence="1" type="primary">pyrD</name>
    <name type="ordered locus">XC_2448</name>
</gene>
<comment type="function">
    <text evidence="1">Catalyzes the conversion of dihydroorotate to orotate with quinone as electron acceptor.</text>
</comment>
<comment type="catalytic activity">
    <reaction evidence="1">
        <text>(S)-dihydroorotate + a quinone = orotate + a quinol</text>
        <dbReference type="Rhea" id="RHEA:30187"/>
        <dbReference type="ChEBI" id="CHEBI:24646"/>
        <dbReference type="ChEBI" id="CHEBI:30839"/>
        <dbReference type="ChEBI" id="CHEBI:30864"/>
        <dbReference type="ChEBI" id="CHEBI:132124"/>
        <dbReference type="EC" id="1.3.5.2"/>
    </reaction>
</comment>
<comment type="cofactor">
    <cofactor evidence="1">
        <name>FMN</name>
        <dbReference type="ChEBI" id="CHEBI:58210"/>
    </cofactor>
    <text evidence="1">Binds 1 FMN per subunit.</text>
</comment>
<comment type="pathway">
    <text evidence="1">Pyrimidine metabolism; UMP biosynthesis via de novo pathway; orotate from (S)-dihydroorotate (quinone route): step 1/1.</text>
</comment>
<comment type="subunit">
    <text evidence="1">Monomer.</text>
</comment>
<comment type="subcellular location">
    <subcellularLocation>
        <location evidence="1">Cell membrane</location>
        <topology evidence="1">Peripheral membrane protein</topology>
    </subcellularLocation>
</comment>
<comment type="similarity">
    <text evidence="1">Belongs to the dihydroorotate dehydrogenase family. Type 2 subfamily.</text>
</comment>
<dbReference type="EC" id="1.3.5.2" evidence="1"/>
<dbReference type="EMBL" id="CP000050">
    <property type="protein sequence ID" value="AAY49498.1"/>
    <property type="molecule type" value="Genomic_DNA"/>
</dbReference>
<dbReference type="RefSeq" id="WP_011036961.1">
    <property type="nucleotide sequence ID" value="NZ_CP155948.1"/>
</dbReference>
<dbReference type="SMR" id="Q4UTX5"/>
<dbReference type="KEGG" id="xcb:XC_2448"/>
<dbReference type="HOGENOM" id="CLU_013640_2_0_6"/>
<dbReference type="UniPathway" id="UPA00070">
    <property type="reaction ID" value="UER00946"/>
</dbReference>
<dbReference type="Proteomes" id="UP000000420">
    <property type="component" value="Chromosome"/>
</dbReference>
<dbReference type="GO" id="GO:0005737">
    <property type="term" value="C:cytoplasm"/>
    <property type="evidence" value="ECO:0007669"/>
    <property type="project" value="InterPro"/>
</dbReference>
<dbReference type="GO" id="GO:0005886">
    <property type="term" value="C:plasma membrane"/>
    <property type="evidence" value="ECO:0007669"/>
    <property type="project" value="UniProtKB-SubCell"/>
</dbReference>
<dbReference type="GO" id="GO:0106430">
    <property type="term" value="F:dihydroorotate dehydrogenase (quinone) activity"/>
    <property type="evidence" value="ECO:0007669"/>
    <property type="project" value="UniProtKB-EC"/>
</dbReference>
<dbReference type="GO" id="GO:0006207">
    <property type="term" value="P:'de novo' pyrimidine nucleobase biosynthetic process"/>
    <property type="evidence" value="ECO:0007669"/>
    <property type="project" value="InterPro"/>
</dbReference>
<dbReference type="GO" id="GO:0044205">
    <property type="term" value="P:'de novo' UMP biosynthetic process"/>
    <property type="evidence" value="ECO:0007669"/>
    <property type="project" value="UniProtKB-UniRule"/>
</dbReference>
<dbReference type="CDD" id="cd04738">
    <property type="entry name" value="DHOD_2_like"/>
    <property type="match status" value="1"/>
</dbReference>
<dbReference type="FunFam" id="3.20.20.70:FF:000028">
    <property type="entry name" value="Dihydroorotate dehydrogenase (quinone)"/>
    <property type="match status" value="1"/>
</dbReference>
<dbReference type="Gene3D" id="3.20.20.70">
    <property type="entry name" value="Aldolase class I"/>
    <property type="match status" value="1"/>
</dbReference>
<dbReference type="HAMAP" id="MF_00225">
    <property type="entry name" value="DHO_dh_type2"/>
    <property type="match status" value="1"/>
</dbReference>
<dbReference type="InterPro" id="IPR013785">
    <property type="entry name" value="Aldolase_TIM"/>
</dbReference>
<dbReference type="InterPro" id="IPR050074">
    <property type="entry name" value="DHO_dehydrogenase"/>
</dbReference>
<dbReference type="InterPro" id="IPR012135">
    <property type="entry name" value="Dihydroorotate_DH_1_2"/>
</dbReference>
<dbReference type="InterPro" id="IPR005719">
    <property type="entry name" value="Dihydroorotate_DH_2"/>
</dbReference>
<dbReference type="InterPro" id="IPR005720">
    <property type="entry name" value="Dihydroorotate_DH_cat"/>
</dbReference>
<dbReference type="InterPro" id="IPR001295">
    <property type="entry name" value="Dihydroorotate_DH_CS"/>
</dbReference>
<dbReference type="NCBIfam" id="NF003644">
    <property type="entry name" value="PRK05286.1-1"/>
    <property type="match status" value="1"/>
</dbReference>
<dbReference type="NCBIfam" id="NF003645">
    <property type="entry name" value="PRK05286.1-2"/>
    <property type="match status" value="1"/>
</dbReference>
<dbReference type="NCBIfam" id="NF003646">
    <property type="entry name" value="PRK05286.1-4"/>
    <property type="match status" value="1"/>
</dbReference>
<dbReference type="NCBIfam" id="NF003652">
    <property type="entry name" value="PRK05286.2-5"/>
    <property type="match status" value="1"/>
</dbReference>
<dbReference type="NCBIfam" id="TIGR01036">
    <property type="entry name" value="pyrD_sub2"/>
    <property type="match status" value="1"/>
</dbReference>
<dbReference type="PANTHER" id="PTHR48109:SF4">
    <property type="entry name" value="DIHYDROOROTATE DEHYDROGENASE (QUINONE), MITOCHONDRIAL"/>
    <property type="match status" value="1"/>
</dbReference>
<dbReference type="PANTHER" id="PTHR48109">
    <property type="entry name" value="DIHYDROOROTATE DEHYDROGENASE (QUINONE), MITOCHONDRIAL-RELATED"/>
    <property type="match status" value="1"/>
</dbReference>
<dbReference type="Pfam" id="PF01180">
    <property type="entry name" value="DHO_dh"/>
    <property type="match status" value="1"/>
</dbReference>
<dbReference type="PIRSF" id="PIRSF000164">
    <property type="entry name" value="DHO_oxidase"/>
    <property type="match status" value="1"/>
</dbReference>
<dbReference type="SUPFAM" id="SSF51395">
    <property type="entry name" value="FMN-linked oxidoreductases"/>
    <property type="match status" value="1"/>
</dbReference>
<dbReference type="PROSITE" id="PS00911">
    <property type="entry name" value="DHODEHASE_1"/>
    <property type="match status" value="1"/>
</dbReference>
<dbReference type="PROSITE" id="PS00912">
    <property type="entry name" value="DHODEHASE_2"/>
    <property type="match status" value="1"/>
</dbReference>
<keyword id="KW-1003">Cell membrane</keyword>
<keyword id="KW-0285">Flavoprotein</keyword>
<keyword id="KW-0288">FMN</keyword>
<keyword id="KW-0472">Membrane</keyword>
<keyword id="KW-0560">Oxidoreductase</keyword>
<keyword id="KW-0665">Pyrimidine biosynthesis</keyword>
<protein>
    <recommendedName>
        <fullName evidence="1">Dihydroorotate dehydrogenase (quinone)</fullName>
        <ecNumber evidence="1">1.3.5.2</ecNumber>
    </recommendedName>
    <alternativeName>
        <fullName evidence="1">DHOdehase</fullName>
        <shortName evidence="1">DHOD</shortName>
        <shortName evidence="1">DHODase</shortName>
    </alternativeName>
    <alternativeName>
        <fullName evidence="1">Dihydroorotate oxidase</fullName>
    </alternativeName>
</protein>
<name>PYRD_XANC8</name>
<accession>Q4UTX5</accession>
<feature type="chain" id="PRO_1000024245" description="Dihydroorotate dehydrogenase (quinone)">
    <location>
        <begin position="1"/>
        <end position="351"/>
    </location>
</feature>
<feature type="active site" description="Nucleophile" evidence="1">
    <location>
        <position position="175"/>
    </location>
</feature>
<feature type="binding site" evidence="1">
    <location>
        <begin position="61"/>
        <end position="65"/>
    </location>
    <ligand>
        <name>FMN</name>
        <dbReference type="ChEBI" id="CHEBI:58210"/>
    </ligand>
</feature>
<feature type="binding site" evidence="1">
    <location>
        <position position="65"/>
    </location>
    <ligand>
        <name>substrate</name>
    </ligand>
</feature>
<feature type="binding site" evidence="1">
    <location>
        <position position="85"/>
    </location>
    <ligand>
        <name>FMN</name>
        <dbReference type="ChEBI" id="CHEBI:58210"/>
    </ligand>
</feature>
<feature type="binding site" evidence="1">
    <location>
        <begin position="110"/>
        <end position="114"/>
    </location>
    <ligand>
        <name>substrate</name>
    </ligand>
</feature>
<feature type="binding site" evidence="1">
    <location>
        <position position="139"/>
    </location>
    <ligand>
        <name>FMN</name>
        <dbReference type="ChEBI" id="CHEBI:58210"/>
    </ligand>
</feature>
<feature type="binding site" evidence="1">
    <location>
        <position position="172"/>
    </location>
    <ligand>
        <name>FMN</name>
        <dbReference type="ChEBI" id="CHEBI:58210"/>
    </ligand>
</feature>
<feature type="binding site" evidence="1">
    <location>
        <position position="172"/>
    </location>
    <ligand>
        <name>substrate</name>
    </ligand>
</feature>
<feature type="binding site" evidence="1">
    <location>
        <position position="177"/>
    </location>
    <ligand>
        <name>substrate</name>
    </ligand>
</feature>
<feature type="binding site" evidence="1">
    <location>
        <position position="217"/>
    </location>
    <ligand>
        <name>FMN</name>
        <dbReference type="ChEBI" id="CHEBI:58210"/>
    </ligand>
</feature>
<feature type="binding site" evidence="1">
    <location>
        <position position="245"/>
    </location>
    <ligand>
        <name>FMN</name>
        <dbReference type="ChEBI" id="CHEBI:58210"/>
    </ligand>
</feature>
<feature type="binding site" evidence="1">
    <location>
        <begin position="246"/>
        <end position="247"/>
    </location>
    <ligand>
        <name>substrate</name>
    </ligand>
</feature>
<feature type="binding site" evidence="1">
    <location>
        <position position="268"/>
    </location>
    <ligand>
        <name>FMN</name>
        <dbReference type="ChEBI" id="CHEBI:58210"/>
    </ligand>
</feature>
<feature type="binding site" evidence="1">
    <location>
        <position position="297"/>
    </location>
    <ligand>
        <name>FMN</name>
        <dbReference type="ChEBI" id="CHEBI:58210"/>
    </ligand>
</feature>
<feature type="binding site" evidence="1">
    <location>
        <begin position="318"/>
        <end position="319"/>
    </location>
    <ligand>
        <name>FMN</name>
        <dbReference type="ChEBI" id="CHEBI:58210"/>
    </ligand>
</feature>
<organism>
    <name type="scientific">Xanthomonas campestris pv. campestris (strain 8004)</name>
    <dbReference type="NCBI Taxonomy" id="314565"/>
    <lineage>
        <taxon>Bacteria</taxon>
        <taxon>Pseudomonadati</taxon>
        <taxon>Pseudomonadota</taxon>
        <taxon>Gammaproteobacteria</taxon>
        <taxon>Lysobacterales</taxon>
        <taxon>Lysobacteraceae</taxon>
        <taxon>Xanthomonas</taxon>
    </lineage>
</organism>
<sequence length="351" mass="37579">MYSLARPFLFAFDAERAHALALRAIDTAYRTGTTALVATRPVPLPTPAFGLMFPNPVGLGAGLDKNGEHIDALLALGFGFVEIGTVTPKPQEGNPKPRMFRLPEYQAVINRMGFNNLGVDVLVKNVQRARRRGGLLGINIGKNKDTPNEEATSDYRYCMERVYPLADYITVNISSPNTAGLRELQEEQALRRLIADLRETQEALAAQHGKRVPMLVKVAPDLNDRDIDAAARVLADLAVDGVIATNTTVTRTLVASHPMAEQAGGLSGAPLLGQSTLVLRRLRARLPESIPLIGVGGITSGADAVAKMAAGASLVQCYSGLVYRGPRLIGECVDAIRRRRESPSGGAVGPL</sequence>
<reference key="1">
    <citation type="journal article" date="2005" name="Genome Res.">
        <title>Comparative and functional genomic analyses of the pathogenicity of phytopathogen Xanthomonas campestris pv. campestris.</title>
        <authorList>
            <person name="Qian W."/>
            <person name="Jia Y."/>
            <person name="Ren S.-X."/>
            <person name="He Y.-Q."/>
            <person name="Feng J.-X."/>
            <person name="Lu L.-F."/>
            <person name="Sun Q."/>
            <person name="Ying G."/>
            <person name="Tang D.-J."/>
            <person name="Tang H."/>
            <person name="Wu W."/>
            <person name="Hao P."/>
            <person name="Wang L."/>
            <person name="Jiang B.-L."/>
            <person name="Zeng S."/>
            <person name="Gu W.-Y."/>
            <person name="Lu G."/>
            <person name="Rong L."/>
            <person name="Tian Y."/>
            <person name="Yao Z."/>
            <person name="Fu G."/>
            <person name="Chen B."/>
            <person name="Fang R."/>
            <person name="Qiang B."/>
            <person name="Chen Z."/>
            <person name="Zhao G.-P."/>
            <person name="Tang J.-L."/>
            <person name="He C."/>
        </authorList>
    </citation>
    <scope>NUCLEOTIDE SEQUENCE [LARGE SCALE GENOMIC DNA]</scope>
    <source>
        <strain>8004</strain>
    </source>
</reference>
<proteinExistence type="inferred from homology"/>
<evidence type="ECO:0000255" key="1">
    <source>
        <dbReference type="HAMAP-Rule" id="MF_00225"/>
    </source>
</evidence>